<organism>
    <name type="scientific">Mycoplasma mobile (strain ATCC 43663 / 163K / NCTC 11711)</name>
    <name type="common">Mesomycoplasma mobile</name>
    <dbReference type="NCBI Taxonomy" id="267748"/>
    <lineage>
        <taxon>Bacteria</taxon>
        <taxon>Bacillati</taxon>
        <taxon>Mycoplasmatota</taxon>
        <taxon>Mycoplasmoidales</taxon>
        <taxon>Metamycoplasmataceae</taxon>
        <taxon>Mesomycoplasma</taxon>
    </lineage>
</organism>
<feature type="chain" id="PRO_0000190855" description="Probable endonuclease 4">
    <location>
        <begin position="1"/>
        <end position="279"/>
    </location>
</feature>
<feature type="binding site" evidence="1">
    <location>
        <position position="74"/>
    </location>
    <ligand>
        <name>Zn(2+)</name>
        <dbReference type="ChEBI" id="CHEBI:29105"/>
        <label>1</label>
    </ligand>
</feature>
<feature type="binding site" evidence="1">
    <location>
        <position position="112"/>
    </location>
    <ligand>
        <name>Zn(2+)</name>
        <dbReference type="ChEBI" id="CHEBI:29105"/>
        <label>1</label>
    </ligand>
</feature>
<feature type="binding site" evidence="1">
    <location>
        <position position="147"/>
    </location>
    <ligand>
        <name>Zn(2+)</name>
        <dbReference type="ChEBI" id="CHEBI:29105"/>
        <label>1</label>
    </ligand>
</feature>
<feature type="binding site" evidence="1">
    <location>
        <position position="147"/>
    </location>
    <ligand>
        <name>Zn(2+)</name>
        <dbReference type="ChEBI" id="CHEBI:29105"/>
        <label>2</label>
    </ligand>
</feature>
<feature type="binding site" evidence="1">
    <location>
        <position position="180"/>
    </location>
    <ligand>
        <name>Zn(2+)</name>
        <dbReference type="ChEBI" id="CHEBI:29105"/>
        <label>2</label>
    </ligand>
</feature>
<feature type="binding site" evidence="1">
    <location>
        <position position="183"/>
    </location>
    <ligand>
        <name>Zn(2+)</name>
        <dbReference type="ChEBI" id="CHEBI:29105"/>
        <label>3</label>
    </ligand>
</feature>
<feature type="binding site" evidence="1">
    <location>
        <position position="214"/>
    </location>
    <ligand>
        <name>Zn(2+)</name>
        <dbReference type="ChEBI" id="CHEBI:29105"/>
        <label>2</label>
    </ligand>
</feature>
<feature type="binding site" evidence="1">
    <location>
        <position position="227"/>
    </location>
    <ligand>
        <name>Zn(2+)</name>
        <dbReference type="ChEBI" id="CHEBI:29105"/>
        <label>3</label>
    </ligand>
</feature>
<feature type="binding site" evidence="1">
    <location>
        <position position="229"/>
    </location>
    <ligand>
        <name>Zn(2+)</name>
        <dbReference type="ChEBI" id="CHEBI:29105"/>
        <label>3</label>
    </ligand>
</feature>
<feature type="binding site" evidence="1">
    <location>
        <position position="259"/>
    </location>
    <ligand>
        <name>Zn(2+)</name>
        <dbReference type="ChEBI" id="CHEBI:29105"/>
        <label>2</label>
    </ligand>
</feature>
<dbReference type="EC" id="3.1.21.2" evidence="1"/>
<dbReference type="EMBL" id="AE017308">
    <property type="protein sequence ID" value="AAT28034.1"/>
    <property type="molecule type" value="Genomic_DNA"/>
</dbReference>
<dbReference type="RefSeq" id="WP_011265068.1">
    <property type="nucleotide sequence ID" value="NC_006908.1"/>
</dbReference>
<dbReference type="SMR" id="Q6KH96"/>
<dbReference type="STRING" id="267748.MMOB5480"/>
<dbReference type="KEGG" id="mmo:MMOB5480"/>
<dbReference type="eggNOG" id="COG0648">
    <property type="taxonomic scope" value="Bacteria"/>
</dbReference>
<dbReference type="HOGENOM" id="CLU_025885_0_4_14"/>
<dbReference type="OrthoDB" id="9805666at2"/>
<dbReference type="Proteomes" id="UP000009072">
    <property type="component" value="Chromosome"/>
</dbReference>
<dbReference type="GO" id="GO:0008833">
    <property type="term" value="F:deoxyribonuclease IV (phage-T4-induced) activity"/>
    <property type="evidence" value="ECO:0007669"/>
    <property type="project" value="UniProtKB-UniRule"/>
</dbReference>
<dbReference type="GO" id="GO:0003677">
    <property type="term" value="F:DNA binding"/>
    <property type="evidence" value="ECO:0007669"/>
    <property type="project" value="InterPro"/>
</dbReference>
<dbReference type="GO" id="GO:0003906">
    <property type="term" value="F:DNA-(apurinic or apyrimidinic site) endonuclease activity"/>
    <property type="evidence" value="ECO:0007669"/>
    <property type="project" value="TreeGrafter"/>
</dbReference>
<dbReference type="GO" id="GO:0008081">
    <property type="term" value="F:phosphoric diester hydrolase activity"/>
    <property type="evidence" value="ECO:0007669"/>
    <property type="project" value="TreeGrafter"/>
</dbReference>
<dbReference type="GO" id="GO:0008270">
    <property type="term" value="F:zinc ion binding"/>
    <property type="evidence" value="ECO:0007669"/>
    <property type="project" value="UniProtKB-UniRule"/>
</dbReference>
<dbReference type="GO" id="GO:0006284">
    <property type="term" value="P:base-excision repair"/>
    <property type="evidence" value="ECO:0007669"/>
    <property type="project" value="TreeGrafter"/>
</dbReference>
<dbReference type="CDD" id="cd00019">
    <property type="entry name" value="AP2Ec"/>
    <property type="match status" value="1"/>
</dbReference>
<dbReference type="FunFam" id="3.20.20.150:FF:000001">
    <property type="entry name" value="Probable endonuclease 4"/>
    <property type="match status" value="1"/>
</dbReference>
<dbReference type="Gene3D" id="3.20.20.150">
    <property type="entry name" value="Divalent-metal-dependent TIM barrel enzymes"/>
    <property type="match status" value="1"/>
</dbReference>
<dbReference type="HAMAP" id="MF_00152">
    <property type="entry name" value="Nfo"/>
    <property type="match status" value="1"/>
</dbReference>
<dbReference type="InterPro" id="IPR001719">
    <property type="entry name" value="AP_endonuc_2"/>
</dbReference>
<dbReference type="InterPro" id="IPR018246">
    <property type="entry name" value="AP_endonuc_F2_Zn_BS"/>
</dbReference>
<dbReference type="InterPro" id="IPR036237">
    <property type="entry name" value="Xyl_isomerase-like_sf"/>
</dbReference>
<dbReference type="InterPro" id="IPR013022">
    <property type="entry name" value="Xyl_isomerase-like_TIM-brl"/>
</dbReference>
<dbReference type="NCBIfam" id="TIGR00587">
    <property type="entry name" value="nfo"/>
    <property type="match status" value="1"/>
</dbReference>
<dbReference type="NCBIfam" id="NF002196">
    <property type="entry name" value="PRK01060.1-1"/>
    <property type="match status" value="1"/>
</dbReference>
<dbReference type="PANTHER" id="PTHR21445:SF0">
    <property type="entry name" value="APURINIC-APYRIMIDINIC ENDONUCLEASE"/>
    <property type="match status" value="1"/>
</dbReference>
<dbReference type="PANTHER" id="PTHR21445">
    <property type="entry name" value="ENDONUCLEASE IV ENDODEOXYRIBONUCLEASE IV"/>
    <property type="match status" value="1"/>
</dbReference>
<dbReference type="Pfam" id="PF01261">
    <property type="entry name" value="AP_endonuc_2"/>
    <property type="match status" value="1"/>
</dbReference>
<dbReference type="SMART" id="SM00518">
    <property type="entry name" value="AP2Ec"/>
    <property type="match status" value="1"/>
</dbReference>
<dbReference type="SUPFAM" id="SSF51658">
    <property type="entry name" value="Xylose isomerase-like"/>
    <property type="match status" value="1"/>
</dbReference>
<dbReference type="PROSITE" id="PS00730">
    <property type="entry name" value="AP_NUCLEASE_F2_2"/>
    <property type="match status" value="1"/>
</dbReference>
<dbReference type="PROSITE" id="PS51432">
    <property type="entry name" value="AP_NUCLEASE_F2_4"/>
    <property type="match status" value="1"/>
</dbReference>
<protein>
    <recommendedName>
        <fullName evidence="1">Probable endonuclease 4</fullName>
        <ecNumber evidence="1">3.1.21.2</ecNumber>
    </recommendedName>
    <alternativeName>
        <fullName evidence="1">Endodeoxyribonuclease IV</fullName>
    </alternativeName>
    <alternativeName>
        <fullName evidence="1">Endonuclease IV</fullName>
    </alternativeName>
</protein>
<comment type="function">
    <text evidence="1">Endonuclease IV plays a role in DNA repair. It cleaves phosphodiester bonds at apurinic or apyrimidinic (AP) sites, generating a 3'-hydroxyl group and a 5'-terminal sugar phosphate.</text>
</comment>
<comment type="catalytic activity">
    <reaction evidence="1">
        <text>Endonucleolytic cleavage to 5'-phosphooligonucleotide end-products.</text>
        <dbReference type="EC" id="3.1.21.2"/>
    </reaction>
</comment>
<comment type="cofactor">
    <cofactor evidence="1">
        <name>Zn(2+)</name>
        <dbReference type="ChEBI" id="CHEBI:29105"/>
    </cofactor>
    <text evidence="1">Binds 3 Zn(2+) ions.</text>
</comment>
<comment type="similarity">
    <text evidence="1">Belongs to the AP endonuclease 2 family.</text>
</comment>
<sequence length="279" mass="32104">MKENKIIIGSHVEFKAPDYLFGAAKTSYNNKANAMMIYLGAPQNSKRVNVSKYKIEEYKRDFEKIIVPENIIVHAPYITNCANPDKFDFATDFLIEEIRRMSFFGAKYLVLHPGAFTTFSKEIAYEILEKALIKILDQTENVVIALETMSGKGTEIGTKINELTNLIEKIKSPRLALCLDTCHVWDAGYDIKNLEVFINHLEEIDALKYIKVIHLNDSKNDIFSKKDRHENIGKGFIGFETLQKIVFHEKFKNIPIILETPWVENIPIYDKEIKLLLGQ</sequence>
<reference key="1">
    <citation type="journal article" date="2004" name="Genome Res.">
        <title>The complete genome and proteome of Mycoplasma mobile.</title>
        <authorList>
            <person name="Jaffe J.D."/>
            <person name="Stange-Thomann N."/>
            <person name="Smith C."/>
            <person name="DeCaprio D."/>
            <person name="Fisher S."/>
            <person name="Butler J."/>
            <person name="Calvo S."/>
            <person name="Elkins T."/>
            <person name="FitzGerald M.G."/>
            <person name="Hafez N."/>
            <person name="Kodira C.D."/>
            <person name="Major J."/>
            <person name="Wang S."/>
            <person name="Wilkinson J."/>
            <person name="Nicol R."/>
            <person name="Nusbaum C."/>
            <person name="Birren B."/>
            <person name="Berg H.C."/>
            <person name="Church G.M."/>
        </authorList>
    </citation>
    <scope>NUCLEOTIDE SEQUENCE [LARGE SCALE GENOMIC DNA]</scope>
    <source>
        <strain>ATCC 43663 / NCTC 11711 / 163 K</strain>
    </source>
</reference>
<gene>
    <name evidence="1" type="primary">nfo</name>
    <name type="ordered locus">MMOB5480</name>
</gene>
<proteinExistence type="inferred from homology"/>
<evidence type="ECO:0000255" key="1">
    <source>
        <dbReference type="HAMAP-Rule" id="MF_00152"/>
    </source>
</evidence>
<accession>Q6KH96</accession>
<name>END4_MYCM1</name>
<keyword id="KW-0227">DNA damage</keyword>
<keyword id="KW-0234">DNA repair</keyword>
<keyword id="KW-0255">Endonuclease</keyword>
<keyword id="KW-0378">Hydrolase</keyword>
<keyword id="KW-0479">Metal-binding</keyword>
<keyword id="KW-0540">Nuclease</keyword>
<keyword id="KW-1185">Reference proteome</keyword>
<keyword id="KW-0862">Zinc</keyword>